<organism>
    <name type="scientific">Escherichia coli (strain ATCC 8739 / DSM 1576 / NBRC 3972 / NCIMB 8545 / WDCM 00012 / Crooks)</name>
    <dbReference type="NCBI Taxonomy" id="481805"/>
    <lineage>
        <taxon>Bacteria</taxon>
        <taxon>Pseudomonadati</taxon>
        <taxon>Pseudomonadota</taxon>
        <taxon>Gammaproteobacteria</taxon>
        <taxon>Enterobacterales</taxon>
        <taxon>Enterobacteriaceae</taxon>
        <taxon>Escherichia</taxon>
    </lineage>
</organism>
<name>YAFD_ECOLC</name>
<sequence length="266" mass="29992">MRKNTYAMRYVAGQPAERILPPGSFASIGQALPPGEPLSTEERIRILVWNIYKQQRAEWLSVLKNYGKDAHLVLLQEAQTTPELVQFATANYLAADQVPAFVLPQHPSGVMTLSAAHPVYCCPLREREPILRLAKSALVTVYPLPDTRLLMVVNIHAVNFSLGVDVYSKQLLPIGDQIAHHSGPVIMAGDFNAWSRRRMNALYRFAREMSLRQVRFTDDQRRRAFGRPLDFVFYRGLNVSEASVLVTRASDHNPLLVEFSPGKPDK</sequence>
<reference key="1">
    <citation type="submission" date="2008-02" db="EMBL/GenBank/DDBJ databases">
        <title>Complete sequence of Escherichia coli C str. ATCC 8739.</title>
        <authorList>
            <person name="Copeland A."/>
            <person name="Lucas S."/>
            <person name="Lapidus A."/>
            <person name="Glavina del Rio T."/>
            <person name="Dalin E."/>
            <person name="Tice H."/>
            <person name="Bruce D."/>
            <person name="Goodwin L."/>
            <person name="Pitluck S."/>
            <person name="Kiss H."/>
            <person name="Brettin T."/>
            <person name="Detter J.C."/>
            <person name="Han C."/>
            <person name="Kuske C.R."/>
            <person name="Schmutz J."/>
            <person name="Larimer F."/>
            <person name="Land M."/>
            <person name="Hauser L."/>
            <person name="Kyrpides N."/>
            <person name="Mikhailova N."/>
            <person name="Ingram L."/>
            <person name="Richardson P."/>
        </authorList>
    </citation>
    <scope>NUCLEOTIDE SEQUENCE [LARGE SCALE GENOMIC DNA]</scope>
    <source>
        <strain>ATCC 8739 / DSM 1576 / NBRC 3972 / NCIMB 8545 / WDCM 00012 / Crooks</strain>
    </source>
</reference>
<gene>
    <name evidence="1" type="primary">yafD</name>
    <name type="ordered locus">EcolC_3456</name>
</gene>
<evidence type="ECO:0000255" key="1">
    <source>
        <dbReference type="HAMAP-Rule" id="MF_01119"/>
    </source>
</evidence>
<feature type="chain" id="PRO_1000084996" description="UPF0294 protein YafD">
    <location>
        <begin position="1"/>
        <end position="266"/>
    </location>
</feature>
<protein>
    <recommendedName>
        <fullName evidence="1">UPF0294 protein YafD</fullName>
    </recommendedName>
</protein>
<proteinExistence type="inferred from homology"/>
<comment type="subcellular location">
    <subcellularLocation>
        <location evidence="1">Cytoplasm</location>
    </subcellularLocation>
</comment>
<comment type="similarity">
    <text evidence="1">Belongs to the UPF0294 family.</text>
</comment>
<accession>B1IPU9</accession>
<keyword id="KW-0963">Cytoplasm</keyword>
<dbReference type="EMBL" id="CP000946">
    <property type="protein sequence ID" value="ACA79070.1"/>
    <property type="molecule type" value="Genomic_DNA"/>
</dbReference>
<dbReference type="RefSeq" id="WP_001230983.1">
    <property type="nucleotide sequence ID" value="NZ_MTFT01000054.1"/>
</dbReference>
<dbReference type="SMR" id="B1IPU9"/>
<dbReference type="KEGG" id="ecl:EcolC_3456"/>
<dbReference type="HOGENOM" id="CLU_083563_0_0_6"/>
<dbReference type="GO" id="GO:0005737">
    <property type="term" value="C:cytoplasm"/>
    <property type="evidence" value="ECO:0007669"/>
    <property type="project" value="UniProtKB-SubCell"/>
</dbReference>
<dbReference type="GO" id="GO:0003824">
    <property type="term" value="F:catalytic activity"/>
    <property type="evidence" value="ECO:0007669"/>
    <property type="project" value="InterPro"/>
</dbReference>
<dbReference type="Gene3D" id="3.60.10.10">
    <property type="entry name" value="Endonuclease/exonuclease/phosphatase"/>
    <property type="match status" value="1"/>
</dbReference>
<dbReference type="HAMAP" id="MF_01119">
    <property type="entry name" value="UPF0294"/>
    <property type="match status" value="1"/>
</dbReference>
<dbReference type="InterPro" id="IPR036691">
    <property type="entry name" value="Endo/exonu/phosph_ase_sf"/>
</dbReference>
<dbReference type="InterPro" id="IPR005135">
    <property type="entry name" value="Endo/exonuclease/phosphatase"/>
</dbReference>
<dbReference type="InterPro" id="IPR022958">
    <property type="entry name" value="UPF0294"/>
</dbReference>
<dbReference type="NCBIfam" id="NF003839">
    <property type="entry name" value="PRK05421.1-1"/>
    <property type="match status" value="1"/>
</dbReference>
<dbReference type="NCBIfam" id="NF003840">
    <property type="entry name" value="PRK05421.1-2"/>
    <property type="match status" value="1"/>
</dbReference>
<dbReference type="NCBIfam" id="NF003841">
    <property type="entry name" value="PRK05421.1-3"/>
    <property type="match status" value="1"/>
</dbReference>
<dbReference type="NCBIfam" id="NF003842">
    <property type="entry name" value="PRK05421.1-4"/>
    <property type="match status" value="1"/>
</dbReference>
<dbReference type="Pfam" id="PF03372">
    <property type="entry name" value="Exo_endo_phos"/>
    <property type="match status" value="1"/>
</dbReference>
<dbReference type="SUPFAM" id="SSF56219">
    <property type="entry name" value="DNase I-like"/>
    <property type="match status" value="1"/>
</dbReference>